<organism>
    <name type="scientific">Cryptococcus neoformans var. neoformans serotype D (strain JEC21 / ATCC MYA-565)</name>
    <name type="common">Filobasidiella neoformans</name>
    <dbReference type="NCBI Taxonomy" id="214684"/>
    <lineage>
        <taxon>Eukaryota</taxon>
        <taxon>Fungi</taxon>
        <taxon>Dikarya</taxon>
        <taxon>Basidiomycota</taxon>
        <taxon>Agaricomycotina</taxon>
        <taxon>Tremellomycetes</taxon>
        <taxon>Tremellales</taxon>
        <taxon>Cryptococcaceae</taxon>
        <taxon>Cryptococcus</taxon>
        <taxon>Cryptococcus neoformans species complex</taxon>
    </lineage>
</organism>
<comment type="function">
    <text evidence="1">Component of the SWR1 complex which mediates the ATP-dependent exchange of histone H2A for the H2A variant HZT1 leading to transcriptional regulation of selected genes by chromatin remodeling. Component of the NuA4 histone acetyltransferase complex which is involved in transcriptional activation of selected genes principally by acetylation of nucleosomal histones H4 and H2A. The NuA4 complex is also involved in DNA repair. Yaf9 may also be required for viability in conditions in which the structural integrity of the spindle is compromised (By similarity).</text>
</comment>
<comment type="subunit">
    <text evidence="1">Component of the SWR1 chromatin-remodeling complex and of the NuA4 histone acetyltransferase complex.</text>
</comment>
<comment type="subcellular location">
    <subcellularLocation>
        <location evidence="1">Cytoplasm</location>
    </subcellularLocation>
    <subcellularLocation>
        <location evidence="3">Nucleus</location>
    </subcellularLocation>
</comment>
<comment type="domain">
    <text evidence="1">The coiled-coil domain is required for assembly into the NuA4 complex.</text>
</comment>
<comment type="similarity">
    <text evidence="5">Belongs to the YAF9 family.</text>
</comment>
<name>AF9_CRYNJ</name>
<keyword id="KW-0010">Activator</keyword>
<keyword id="KW-0156">Chromatin regulator</keyword>
<keyword id="KW-0175">Coiled coil</keyword>
<keyword id="KW-0963">Cytoplasm</keyword>
<keyword id="KW-0227">DNA damage</keyword>
<keyword id="KW-0234">DNA repair</keyword>
<keyword id="KW-0539">Nucleus</keyword>
<keyword id="KW-1185">Reference proteome</keyword>
<keyword id="KW-0804">Transcription</keyword>
<keyword id="KW-0805">Transcription regulation</keyword>
<protein>
    <recommendedName>
        <fullName>Protein AF-9 homolog</fullName>
    </recommendedName>
</protein>
<accession>P0CM08</accession>
<accession>Q55MP8</accession>
<accession>Q5KB23</accession>
<gene>
    <name type="primary">YAF9</name>
    <name type="ordered locus">CNI04050</name>
</gene>
<evidence type="ECO:0000250" key="1"/>
<evidence type="ECO:0000255" key="2"/>
<evidence type="ECO:0000255" key="3">
    <source>
        <dbReference type="PROSITE-ProRule" id="PRU00376"/>
    </source>
</evidence>
<evidence type="ECO:0000256" key="4">
    <source>
        <dbReference type="SAM" id="MobiDB-lite"/>
    </source>
</evidence>
<evidence type="ECO:0000305" key="5"/>
<dbReference type="EMBL" id="AE017349">
    <property type="protein sequence ID" value="AAW45303.1"/>
    <property type="molecule type" value="Genomic_DNA"/>
</dbReference>
<dbReference type="RefSeq" id="XP_572610.1">
    <property type="nucleotide sequence ID" value="XM_572610.1"/>
</dbReference>
<dbReference type="SMR" id="P0CM08"/>
<dbReference type="STRING" id="214684.P0CM08"/>
<dbReference type="PaxDb" id="214684-P0CM08"/>
<dbReference type="EnsemblFungi" id="AAW45303">
    <property type="protein sequence ID" value="AAW45303"/>
    <property type="gene ID" value="CNI04050"/>
</dbReference>
<dbReference type="GeneID" id="3259445"/>
<dbReference type="KEGG" id="cne:CNI04050"/>
<dbReference type="VEuPathDB" id="FungiDB:CNI04050"/>
<dbReference type="eggNOG" id="KOG3149">
    <property type="taxonomic scope" value="Eukaryota"/>
</dbReference>
<dbReference type="HOGENOM" id="CLU_051385_2_1_1"/>
<dbReference type="InParanoid" id="P0CM08"/>
<dbReference type="OMA" id="EDHTHQW"/>
<dbReference type="OrthoDB" id="16041at2759"/>
<dbReference type="PHI-base" id="PHI:11100"/>
<dbReference type="Proteomes" id="UP000002149">
    <property type="component" value="Chromosome 9"/>
</dbReference>
<dbReference type="GO" id="GO:0005737">
    <property type="term" value="C:cytoplasm"/>
    <property type="evidence" value="ECO:0007669"/>
    <property type="project" value="UniProtKB-SubCell"/>
</dbReference>
<dbReference type="GO" id="GO:0035267">
    <property type="term" value="C:NuA4 histone acetyltransferase complex"/>
    <property type="evidence" value="ECO:0000318"/>
    <property type="project" value="GO_Central"/>
</dbReference>
<dbReference type="GO" id="GO:0005634">
    <property type="term" value="C:nucleus"/>
    <property type="evidence" value="ECO:0000318"/>
    <property type="project" value="GO_Central"/>
</dbReference>
<dbReference type="GO" id="GO:0042393">
    <property type="term" value="F:histone binding"/>
    <property type="evidence" value="ECO:0000318"/>
    <property type="project" value="GO_Central"/>
</dbReference>
<dbReference type="GO" id="GO:0006338">
    <property type="term" value="P:chromatin remodeling"/>
    <property type="evidence" value="ECO:0000318"/>
    <property type="project" value="GO_Central"/>
</dbReference>
<dbReference type="GO" id="GO:0006281">
    <property type="term" value="P:DNA repair"/>
    <property type="evidence" value="ECO:0007669"/>
    <property type="project" value="UniProtKB-KW"/>
</dbReference>
<dbReference type="GO" id="GO:0006357">
    <property type="term" value="P:regulation of transcription by RNA polymerase II"/>
    <property type="evidence" value="ECO:0000318"/>
    <property type="project" value="GO_Central"/>
</dbReference>
<dbReference type="CDD" id="cd16908">
    <property type="entry name" value="YEATS_Yaf9_like"/>
    <property type="match status" value="1"/>
</dbReference>
<dbReference type="Gene3D" id="2.60.40.1970">
    <property type="entry name" value="YEATS domain"/>
    <property type="match status" value="1"/>
</dbReference>
<dbReference type="InterPro" id="IPR038704">
    <property type="entry name" value="YEAST_sf"/>
</dbReference>
<dbReference type="InterPro" id="IPR005033">
    <property type="entry name" value="YEATS"/>
</dbReference>
<dbReference type="InterPro" id="IPR055129">
    <property type="entry name" value="YEATS_dom"/>
</dbReference>
<dbReference type="PANTHER" id="PTHR23195">
    <property type="entry name" value="YEATS DOMAIN"/>
    <property type="match status" value="1"/>
</dbReference>
<dbReference type="Pfam" id="PF03366">
    <property type="entry name" value="YEATS"/>
    <property type="match status" value="1"/>
</dbReference>
<dbReference type="PROSITE" id="PS51037">
    <property type="entry name" value="YEATS"/>
    <property type="match status" value="1"/>
</dbReference>
<proteinExistence type="inferred from homology"/>
<feature type="chain" id="PRO_0000215926" description="Protein AF-9 homolog">
    <location>
        <begin position="1"/>
        <end position="392"/>
    </location>
</feature>
<feature type="domain" description="YEATS" evidence="3">
    <location>
        <begin position="5"/>
        <end position="268"/>
    </location>
</feature>
<feature type="region of interest" description="Disordered" evidence="4">
    <location>
        <begin position="146"/>
        <end position="213"/>
    </location>
</feature>
<feature type="region of interest" description="Disordered" evidence="4">
    <location>
        <begin position="263"/>
        <end position="330"/>
    </location>
</feature>
<feature type="coiled-coil region" evidence="2">
    <location>
        <begin position="357"/>
        <end position="392"/>
    </location>
</feature>
<feature type="compositionally biased region" description="Polar residues" evidence="4">
    <location>
        <begin position="192"/>
        <end position="203"/>
    </location>
</feature>
<feature type="compositionally biased region" description="Basic and acidic residues" evidence="4">
    <location>
        <begin position="280"/>
        <end position="290"/>
    </location>
</feature>
<feature type="compositionally biased region" description="Low complexity" evidence="4">
    <location>
        <begin position="296"/>
        <end position="314"/>
    </location>
</feature>
<sequence>MSSERVRGIQVHRPIIFGSHARLLTEAEKQLAPAGHTHKWTVFLNSAASPPLKQGEPPDYEDIDYLPGGADDLSYFIRKVTFKLHETYATPNRVIDKPPYRVSETGWGEFTVQIRIQLIPESSEKPLGLQHNIKLHHWGAPVEPLPVVSGAPTPTPVPTESNTEVKLEPDTPAPLEESVTPAPTIQRPASEPATNEPGSNQGTPAPPGGDSTEQIKVDVATPALEVIEPSATPAPLSLAARLPIHAWQYDEIVFSDPPRQFLDILNAHPPTPLPAKSRRPRDQREDYEARKKGKSAARGASVTASARASRAGTVDTAAAGTPAPAQIGIPGEPGSADVPLEFTQEMLKGEHNAMLDARVKIVEQMDRWRERLIALEKELAKAKEDVKATAAM</sequence>
<reference key="1">
    <citation type="journal article" date="2005" name="Science">
        <title>The genome of the basidiomycetous yeast and human pathogen Cryptococcus neoformans.</title>
        <authorList>
            <person name="Loftus B.J."/>
            <person name="Fung E."/>
            <person name="Roncaglia P."/>
            <person name="Rowley D."/>
            <person name="Amedeo P."/>
            <person name="Bruno D."/>
            <person name="Vamathevan J."/>
            <person name="Miranda M."/>
            <person name="Anderson I.J."/>
            <person name="Fraser J.A."/>
            <person name="Allen J.E."/>
            <person name="Bosdet I.E."/>
            <person name="Brent M.R."/>
            <person name="Chiu R."/>
            <person name="Doering T.L."/>
            <person name="Donlin M.J."/>
            <person name="D'Souza C.A."/>
            <person name="Fox D.S."/>
            <person name="Grinberg V."/>
            <person name="Fu J."/>
            <person name="Fukushima M."/>
            <person name="Haas B.J."/>
            <person name="Huang J.C."/>
            <person name="Janbon G."/>
            <person name="Jones S.J.M."/>
            <person name="Koo H.L."/>
            <person name="Krzywinski M.I."/>
            <person name="Kwon-Chung K.J."/>
            <person name="Lengeler K.B."/>
            <person name="Maiti R."/>
            <person name="Marra M.A."/>
            <person name="Marra R.E."/>
            <person name="Mathewson C.A."/>
            <person name="Mitchell T.G."/>
            <person name="Pertea M."/>
            <person name="Riggs F.R."/>
            <person name="Salzberg S.L."/>
            <person name="Schein J.E."/>
            <person name="Shvartsbeyn A."/>
            <person name="Shin H."/>
            <person name="Shumway M."/>
            <person name="Specht C.A."/>
            <person name="Suh B.B."/>
            <person name="Tenney A."/>
            <person name="Utterback T.R."/>
            <person name="Wickes B.L."/>
            <person name="Wortman J.R."/>
            <person name="Wye N.H."/>
            <person name="Kronstad J.W."/>
            <person name="Lodge J.K."/>
            <person name="Heitman J."/>
            <person name="Davis R.W."/>
            <person name="Fraser C.M."/>
            <person name="Hyman R.W."/>
        </authorList>
    </citation>
    <scope>NUCLEOTIDE SEQUENCE [LARGE SCALE GENOMIC DNA]</scope>
    <source>
        <strain>JEC21 / ATCC MYA-565</strain>
    </source>
</reference>